<name>MLO2_ARATH</name>
<gene>
    <name type="primary">MLO2</name>
    <name type="ordered locus">At1g11310</name>
    <name type="ORF">T28P6.4</name>
</gene>
<feature type="chain" id="PRO_0000209932" description="MLO-like protein 2">
    <location>
        <begin position="1"/>
        <end position="573"/>
    </location>
</feature>
<feature type="topological domain" description="Extracellular" evidence="2">
    <location>
        <begin position="1"/>
        <end position="15"/>
    </location>
</feature>
<feature type="transmembrane region" description="Helical; Name=1" evidence="2">
    <location>
        <begin position="16"/>
        <end position="36"/>
    </location>
</feature>
<feature type="topological domain" description="Cytoplasmic" evidence="2">
    <location>
        <begin position="37"/>
        <end position="61"/>
    </location>
</feature>
<feature type="transmembrane region" description="Helical; Name=2" evidence="2">
    <location>
        <begin position="62"/>
        <end position="82"/>
    </location>
</feature>
<feature type="topological domain" description="Extracellular" evidence="2">
    <location>
        <begin position="83"/>
        <end position="164"/>
    </location>
</feature>
<feature type="transmembrane region" description="Helical; Name=3" evidence="2">
    <location>
        <begin position="165"/>
        <end position="185"/>
    </location>
</feature>
<feature type="topological domain" description="Cytoplasmic" evidence="2">
    <location>
        <begin position="186"/>
        <end position="287"/>
    </location>
</feature>
<feature type="transmembrane region" description="Helical; Name=4" evidence="2">
    <location>
        <begin position="288"/>
        <end position="308"/>
    </location>
</feature>
<feature type="topological domain" description="Extracellular" evidence="2">
    <location>
        <begin position="309"/>
        <end position="317"/>
    </location>
</feature>
<feature type="transmembrane region" description="Helical; Name=5" evidence="2">
    <location>
        <begin position="318"/>
        <end position="338"/>
    </location>
</feature>
<feature type="topological domain" description="Cytoplasmic" evidence="2">
    <location>
        <begin position="339"/>
        <end position="371"/>
    </location>
</feature>
<feature type="transmembrane region" description="Helical; Name=6" evidence="2">
    <location>
        <begin position="372"/>
        <end position="392"/>
    </location>
</feature>
<feature type="topological domain" description="Extracellular" evidence="2">
    <location>
        <begin position="393"/>
        <end position="415"/>
    </location>
</feature>
<feature type="transmembrane region" description="Helical; Name=7" evidence="2">
    <location>
        <begin position="416"/>
        <end position="436"/>
    </location>
</feature>
<feature type="topological domain" description="Cytoplasmic" evidence="2">
    <location>
        <begin position="437"/>
        <end position="573"/>
    </location>
</feature>
<feature type="region of interest" description="Calmodulin-binding">
    <location>
        <begin position="450"/>
        <end position="471"/>
    </location>
</feature>
<feature type="region of interest" description="Disordered" evidence="3">
    <location>
        <begin position="462"/>
        <end position="573"/>
    </location>
</feature>
<feature type="compositionally biased region" description="Polar residues" evidence="3">
    <location>
        <begin position="473"/>
        <end position="490"/>
    </location>
</feature>
<feature type="compositionally biased region" description="Polar residues" evidence="3">
    <location>
        <begin position="498"/>
        <end position="513"/>
    </location>
</feature>
<feature type="compositionally biased region" description="Basic and acidic residues" evidence="3">
    <location>
        <begin position="522"/>
        <end position="548"/>
    </location>
</feature>
<feature type="modified residue" description="Phosphoserine" evidence="5">
    <location>
        <position position="512"/>
    </location>
</feature>
<evidence type="ECO:0000250" key="1"/>
<evidence type="ECO:0000255" key="2"/>
<evidence type="ECO:0000256" key="3">
    <source>
        <dbReference type="SAM" id="MobiDB-lite"/>
    </source>
</evidence>
<evidence type="ECO:0000305" key="4"/>
<evidence type="ECO:0007744" key="5">
    <source>
    </source>
</evidence>
<accession>Q9SXB6</accession>
<dbReference type="EMBL" id="AF369563">
    <property type="protein sequence ID" value="AAK53795.1"/>
    <property type="molecule type" value="mRNA"/>
</dbReference>
<dbReference type="EMBL" id="AC007259">
    <property type="protein sequence ID" value="AAD49991.1"/>
    <property type="molecule type" value="Genomic_DNA"/>
</dbReference>
<dbReference type="EMBL" id="CP002684">
    <property type="protein sequence ID" value="AEE28715.1"/>
    <property type="molecule type" value="Genomic_DNA"/>
</dbReference>
<dbReference type="EMBL" id="AY086586">
    <property type="protein sequence ID" value="AAM63648.1"/>
    <property type="molecule type" value="mRNA"/>
</dbReference>
<dbReference type="PIR" id="B86247">
    <property type="entry name" value="B86247"/>
</dbReference>
<dbReference type="RefSeq" id="NP_172598.1">
    <molecule id="Q9SXB6-1"/>
    <property type="nucleotide sequence ID" value="NM_101004.4"/>
</dbReference>
<dbReference type="SMR" id="Q9SXB6"/>
<dbReference type="BioGRID" id="22913">
    <property type="interactions" value="14"/>
</dbReference>
<dbReference type="FunCoup" id="Q9SXB6">
    <property type="interactions" value="426"/>
</dbReference>
<dbReference type="IntAct" id="Q9SXB6">
    <property type="interactions" value="2"/>
</dbReference>
<dbReference type="STRING" id="3702.Q9SXB6"/>
<dbReference type="iPTMnet" id="Q9SXB6"/>
<dbReference type="PaxDb" id="3702-AT1G11310.1"/>
<dbReference type="ProteomicsDB" id="251413">
    <molecule id="Q9SXB6-1"/>
</dbReference>
<dbReference type="EnsemblPlants" id="AT1G11310.1">
    <molecule id="Q9SXB6-1"/>
    <property type="protein sequence ID" value="AT1G11310.1"/>
    <property type="gene ID" value="AT1G11310"/>
</dbReference>
<dbReference type="GeneID" id="837673"/>
<dbReference type="Gramene" id="AT1G11310.1">
    <molecule id="Q9SXB6-1"/>
    <property type="protein sequence ID" value="AT1G11310.1"/>
    <property type="gene ID" value="AT1G11310"/>
</dbReference>
<dbReference type="KEGG" id="ath:AT1G11310"/>
<dbReference type="Araport" id="AT1G11310"/>
<dbReference type="TAIR" id="AT1G11310">
    <property type="gene designation" value="MLO2"/>
</dbReference>
<dbReference type="eggNOG" id="ENOG502QVKX">
    <property type="taxonomic scope" value="Eukaryota"/>
</dbReference>
<dbReference type="InParanoid" id="Q9SXB6"/>
<dbReference type="OrthoDB" id="1388414at2759"/>
<dbReference type="PhylomeDB" id="Q9SXB6"/>
<dbReference type="PRO" id="PR:Q9SXB6"/>
<dbReference type="Proteomes" id="UP000006548">
    <property type="component" value="Chromosome 1"/>
</dbReference>
<dbReference type="ExpressionAtlas" id="Q9SXB6">
    <property type="expression patterns" value="baseline and differential"/>
</dbReference>
<dbReference type="GO" id="GO:0005576">
    <property type="term" value="C:extracellular region"/>
    <property type="evidence" value="ECO:0007005"/>
    <property type="project" value="TAIR"/>
</dbReference>
<dbReference type="GO" id="GO:0005794">
    <property type="term" value="C:Golgi apparatus"/>
    <property type="evidence" value="ECO:0007005"/>
    <property type="project" value="TAIR"/>
</dbReference>
<dbReference type="GO" id="GO:0005886">
    <property type="term" value="C:plasma membrane"/>
    <property type="evidence" value="ECO:0000250"/>
    <property type="project" value="TAIR"/>
</dbReference>
<dbReference type="GO" id="GO:0009506">
    <property type="term" value="C:plasmodesma"/>
    <property type="evidence" value="ECO:0007005"/>
    <property type="project" value="TAIR"/>
</dbReference>
<dbReference type="GO" id="GO:0005516">
    <property type="term" value="F:calmodulin binding"/>
    <property type="evidence" value="ECO:0007669"/>
    <property type="project" value="UniProtKB-KW"/>
</dbReference>
<dbReference type="GO" id="GO:0050832">
    <property type="term" value="P:defense response to fungus"/>
    <property type="evidence" value="ECO:0000315"/>
    <property type="project" value="TAIR"/>
</dbReference>
<dbReference type="GO" id="GO:0031348">
    <property type="term" value="P:negative regulation of defense response"/>
    <property type="evidence" value="ECO:0000315"/>
    <property type="project" value="TAIR"/>
</dbReference>
<dbReference type="GO" id="GO:0009620">
    <property type="term" value="P:response to fungus"/>
    <property type="evidence" value="ECO:0000315"/>
    <property type="project" value="TAIR"/>
</dbReference>
<dbReference type="InterPro" id="IPR004326">
    <property type="entry name" value="Mlo"/>
</dbReference>
<dbReference type="PANTHER" id="PTHR31942">
    <property type="entry name" value="MLO-LIKE PROTEIN 1"/>
    <property type="match status" value="1"/>
</dbReference>
<dbReference type="PANTHER" id="PTHR31942:SF86">
    <property type="entry name" value="MLO-LIKE PROTEIN 2"/>
    <property type="match status" value="1"/>
</dbReference>
<dbReference type="Pfam" id="PF03094">
    <property type="entry name" value="Mlo"/>
    <property type="match status" value="1"/>
</dbReference>
<sequence length="573" mass="65544">MADQVKERTLEETSTWAVAVVCFVLLFISIVLEHSIHKIGTWFKKKHKQALFEALEKVKAELMLLGFISLLLTIGQTPISNICISQKVASTMHPCSAAEEAKKYGKKDAGKKDDGDGDKPGRRLLLELAESYIHRRSLATKGYDKCAEKGKVAFVSAYGIHQLHIFIFVLAVVHVVYCIVTYAFGKIKMRTWKSWEEETKTIEYQYSNDPERFRFARDTSFGRRHLNFWSKTRVTLWIVCFFRQFFGSVTKVDYLALRHGFIMAHFAPGNESRFDFRKYIQRSLEKDFKTVVEISPVIWFVAVLFLLTNSYGLRSYLWLPFIPLVVILIVGTKLEVIITKLGLRIQEKGDVVRGAPVVQPGDDLFWFGKPRFILFLIHLVLFTNAFQLAFFAWSTYEFNLNNCFHESTADVVIRLVVGAVVQILCSYVTLPLYALVTQMGSKMKPTVFNDRVATALKKWHHTAKNETKHGRHSGSNTPFSSRPTTPTHGSSPIHLLHNFNNRSVENYPSSPSPRYSGHGHHEHQFWDPESQHQEAETSTHHSLAHESSEPVLASVELPPIRTSKSLRDFSFKK</sequence>
<comment type="function">
    <text evidence="1">May be involved in modulation of pathogen defense and leaf cell death. Activity seems to be regulated by Ca(2+)-dependent calmodulin binding and seems not to require heterotrimeric G proteins (By similarity).</text>
</comment>
<comment type="subcellular location">
    <subcellularLocation>
        <location evidence="1">Membrane</location>
        <topology evidence="1">Multi-pass membrane protein</topology>
    </subcellularLocation>
</comment>
<comment type="alternative products">
    <event type="alternative splicing"/>
    <isoform>
        <id>Q9SXB6-1</id>
        <name>1</name>
        <sequence type="displayed"/>
    </isoform>
    <text>A number of isoforms are produced. According to EST sequences.</text>
</comment>
<comment type="domain">
    <text>The C-terminus contains a calmodulin-binding domain, which binds calmodulin in a calcium-dependent fashion.</text>
</comment>
<comment type="similarity">
    <text evidence="4">Belongs to the MLO family.</text>
</comment>
<protein>
    <recommendedName>
        <fullName>MLO-like protein 2</fullName>
        <shortName>AtMlo2</shortName>
    </recommendedName>
</protein>
<organism>
    <name type="scientific">Arabidopsis thaliana</name>
    <name type="common">Mouse-ear cress</name>
    <dbReference type="NCBI Taxonomy" id="3702"/>
    <lineage>
        <taxon>Eukaryota</taxon>
        <taxon>Viridiplantae</taxon>
        <taxon>Streptophyta</taxon>
        <taxon>Embryophyta</taxon>
        <taxon>Tracheophyta</taxon>
        <taxon>Spermatophyta</taxon>
        <taxon>Magnoliopsida</taxon>
        <taxon>eudicotyledons</taxon>
        <taxon>Gunneridae</taxon>
        <taxon>Pentapetalae</taxon>
        <taxon>rosids</taxon>
        <taxon>malvids</taxon>
        <taxon>Brassicales</taxon>
        <taxon>Brassicaceae</taxon>
        <taxon>Camelineae</taxon>
        <taxon>Arabidopsis</taxon>
    </lineage>
</organism>
<keyword id="KW-0025">Alternative splicing</keyword>
<keyword id="KW-0112">Calmodulin-binding</keyword>
<keyword id="KW-0472">Membrane</keyword>
<keyword id="KW-0568">Pathogenesis-related protein</keyword>
<keyword id="KW-0597">Phosphoprotein</keyword>
<keyword id="KW-0611">Plant defense</keyword>
<keyword id="KW-1185">Reference proteome</keyword>
<keyword id="KW-0812">Transmembrane</keyword>
<keyword id="KW-1133">Transmembrane helix</keyword>
<proteinExistence type="evidence at protein level"/>
<reference key="1">
    <citation type="journal article" date="2003" name="J. Mol. Evol.">
        <title>Molecular phylogeny and evolution of the plant-specific seven-transmembrane MLO family.</title>
        <authorList>
            <person name="Devoto A."/>
            <person name="Hartmann H.A."/>
            <person name="Piffanelli P."/>
            <person name="Elliott C."/>
            <person name="Simmons C."/>
            <person name="Taramino G."/>
            <person name="Goh C.-S."/>
            <person name="Cohen F.E."/>
            <person name="Emerson B.C."/>
            <person name="Schulze-Lefert P."/>
            <person name="Panstruga R."/>
        </authorList>
    </citation>
    <scope>NUCLEOTIDE SEQUENCE [MRNA]</scope>
</reference>
<reference key="2">
    <citation type="journal article" date="2000" name="Nature">
        <title>Sequence and analysis of chromosome 1 of the plant Arabidopsis thaliana.</title>
        <authorList>
            <person name="Theologis A."/>
            <person name="Ecker J.R."/>
            <person name="Palm C.J."/>
            <person name="Federspiel N.A."/>
            <person name="Kaul S."/>
            <person name="White O."/>
            <person name="Alonso J."/>
            <person name="Altafi H."/>
            <person name="Araujo R."/>
            <person name="Bowman C.L."/>
            <person name="Brooks S.Y."/>
            <person name="Buehler E."/>
            <person name="Chan A."/>
            <person name="Chao Q."/>
            <person name="Chen H."/>
            <person name="Cheuk R.F."/>
            <person name="Chin C.W."/>
            <person name="Chung M.K."/>
            <person name="Conn L."/>
            <person name="Conway A.B."/>
            <person name="Conway A.R."/>
            <person name="Creasy T.H."/>
            <person name="Dewar K."/>
            <person name="Dunn P."/>
            <person name="Etgu P."/>
            <person name="Feldblyum T.V."/>
            <person name="Feng J.-D."/>
            <person name="Fong B."/>
            <person name="Fujii C.Y."/>
            <person name="Gill J.E."/>
            <person name="Goldsmith A.D."/>
            <person name="Haas B."/>
            <person name="Hansen N.F."/>
            <person name="Hughes B."/>
            <person name="Huizar L."/>
            <person name="Hunter J.L."/>
            <person name="Jenkins J."/>
            <person name="Johnson-Hopson C."/>
            <person name="Khan S."/>
            <person name="Khaykin E."/>
            <person name="Kim C.J."/>
            <person name="Koo H.L."/>
            <person name="Kremenetskaia I."/>
            <person name="Kurtz D.B."/>
            <person name="Kwan A."/>
            <person name="Lam B."/>
            <person name="Langin-Hooper S."/>
            <person name="Lee A."/>
            <person name="Lee J.M."/>
            <person name="Lenz C.A."/>
            <person name="Li J.H."/>
            <person name="Li Y.-P."/>
            <person name="Lin X."/>
            <person name="Liu S.X."/>
            <person name="Liu Z.A."/>
            <person name="Luros J.S."/>
            <person name="Maiti R."/>
            <person name="Marziali A."/>
            <person name="Militscher J."/>
            <person name="Miranda M."/>
            <person name="Nguyen M."/>
            <person name="Nierman W.C."/>
            <person name="Osborne B.I."/>
            <person name="Pai G."/>
            <person name="Peterson J."/>
            <person name="Pham P.K."/>
            <person name="Rizzo M."/>
            <person name="Rooney T."/>
            <person name="Rowley D."/>
            <person name="Sakano H."/>
            <person name="Salzberg S.L."/>
            <person name="Schwartz J.R."/>
            <person name="Shinn P."/>
            <person name="Southwick A.M."/>
            <person name="Sun H."/>
            <person name="Tallon L.J."/>
            <person name="Tambunga G."/>
            <person name="Toriumi M.J."/>
            <person name="Town C.D."/>
            <person name="Utterback T."/>
            <person name="Van Aken S."/>
            <person name="Vaysberg M."/>
            <person name="Vysotskaia V.S."/>
            <person name="Walker M."/>
            <person name="Wu D."/>
            <person name="Yu G."/>
            <person name="Fraser C.M."/>
            <person name="Venter J.C."/>
            <person name="Davis R.W."/>
        </authorList>
    </citation>
    <scope>NUCLEOTIDE SEQUENCE [LARGE SCALE GENOMIC DNA]</scope>
    <source>
        <strain>cv. Columbia</strain>
    </source>
</reference>
<reference key="3">
    <citation type="journal article" date="2017" name="Plant J.">
        <title>Araport11: a complete reannotation of the Arabidopsis thaliana reference genome.</title>
        <authorList>
            <person name="Cheng C.Y."/>
            <person name="Krishnakumar V."/>
            <person name="Chan A.P."/>
            <person name="Thibaud-Nissen F."/>
            <person name="Schobel S."/>
            <person name="Town C.D."/>
        </authorList>
    </citation>
    <scope>GENOME REANNOTATION</scope>
    <source>
        <strain>cv. Columbia</strain>
    </source>
</reference>
<reference key="4">
    <citation type="submission" date="2002-03" db="EMBL/GenBank/DDBJ databases">
        <title>Full-length cDNA from Arabidopsis thaliana.</title>
        <authorList>
            <person name="Brover V.V."/>
            <person name="Troukhan M.E."/>
            <person name="Alexandrov N.A."/>
            <person name="Lu Y.-P."/>
            <person name="Flavell R.B."/>
            <person name="Feldmann K.A."/>
        </authorList>
    </citation>
    <scope>NUCLEOTIDE SEQUENCE [LARGE SCALE MRNA]</scope>
</reference>
<reference key="5">
    <citation type="journal article" date="2002" name="Nature">
        <title>Calmodulin interacts with MLO protein to regulate defence against mildew in barley.</title>
        <authorList>
            <person name="Kim M.C."/>
            <person name="Panstruga R."/>
            <person name="Elliott C."/>
            <person name="Mueller J."/>
            <person name="Devoto A."/>
            <person name="Yoon H.W."/>
            <person name="Park H.C."/>
            <person name="Cho M.J."/>
            <person name="Schulze-Lefert P."/>
        </authorList>
    </citation>
    <scope>INTERACTION WITH CALMODULIN</scope>
</reference>
<reference key="6">
    <citation type="journal article" date="2009" name="Plant Physiol.">
        <title>Large-scale Arabidopsis phosphoproteome profiling reveals novel chloroplast kinase substrates and phosphorylation networks.</title>
        <authorList>
            <person name="Reiland S."/>
            <person name="Messerli G."/>
            <person name="Baerenfaller K."/>
            <person name="Gerrits B."/>
            <person name="Endler A."/>
            <person name="Grossmann J."/>
            <person name="Gruissem W."/>
            <person name="Baginsky S."/>
        </authorList>
    </citation>
    <scope>PHOSPHORYLATION [LARGE SCALE ANALYSIS] AT SER-512</scope>
    <scope>IDENTIFICATION BY MASS SPECTROMETRY [LARGE SCALE ANALYSIS]</scope>
</reference>